<name>AROC_PSEPF</name>
<sequence length="363" mass="39096">MSGNTYGKLFTVTTAGESHGPALVAIVDGCPPGLEISLEDLQRDLDRRKPGTSRHTTQRQEADEVEILSGVFEGRTTGCSIGLLIRNTDQKSKDYSAIKDLFRPAHADYTYHHKYGERDYRGGGRSSARETAMRVAAGAIAKKYLASQGIVIRGYMSQLGPIEIPFKTWESVEQNAFFSPDPDKVPELEAYMDQLRRDQDSVGAKITVVAEGVMPGLGEPIFDRLDAELAHALMSINAVKGVEIGAGFACVAQRGTEHRDELTPEGFLSNNAGGILGGISSGQPIVAHLALKPTSSITTPGRSIDIDGNPVDVITKGRHDPCVGIRATPIAEAMMAIVLMDHLLRHRGQNADVRVSTPVLGQL</sequence>
<gene>
    <name evidence="1" type="primary">aroC</name>
    <name type="ordered locus">Pfl01_1722</name>
</gene>
<organism>
    <name type="scientific">Pseudomonas fluorescens (strain Pf0-1)</name>
    <dbReference type="NCBI Taxonomy" id="205922"/>
    <lineage>
        <taxon>Bacteria</taxon>
        <taxon>Pseudomonadati</taxon>
        <taxon>Pseudomonadota</taxon>
        <taxon>Gammaproteobacteria</taxon>
        <taxon>Pseudomonadales</taxon>
        <taxon>Pseudomonadaceae</taxon>
        <taxon>Pseudomonas</taxon>
    </lineage>
</organism>
<comment type="function">
    <text evidence="1">Catalyzes the anti-1,4-elimination of the C-3 phosphate and the C-6 proR hydrogen from 5-enolpyruvylshikimate-3-phosphate (EPSP) to yield chorismate, which is the branch point compound that serves as the starting substrate for the three terminal pathways of aromatic amino acid biosynthesis. This reaction introduces a second double bond into the aromatic ring system.</text>
</comment>
<comment type="catalytic activity">
    <reaction evidence="1">
        <text>5-O-(1-carboxyvinyl)-3-phosphoshikimate = chorismate + phosphate</text>
        <dbReference type="Rhea" id="RHEA:21020"/>
        <dbReference type="ChEBI" id="CHEBI:29748"/>
        <dbReference type="ChEBI" id="CHEBI:43474"/>
        <dbReference type="ChEBI" id="CHEBI:57701"/>
        <dbReference type="EC" id="4.2.3.5"/>
    </reaction>
</comment>
<comment type="cofactor">
    <cofactor evidence="1">
        <name>FMNH2</name>
        <dbReference type="ChEBI" id="CHEBI:57618"/>
    </cofactor>
    <text evidence="1">Reduced FMN (FMNH(2)).</text>
</comment>
<comment type="pathway">
    <text evidence="1">Metabolic intermediate biosynthesis; chorismate biosynthesis; chorismate from D-erythrose 4-phosphate and phosphoenolpyruvate: step 7/7.</text>
</comment>
<comment type="subunit">
    <text evidence="1">Homotetramer.</text>
</comment>
<comment type="similarity">
    <text evidence="1">Belongs to the chorismate synthase family.</text>
</comment>
<accession>Q3KFJ1</accession>
<evidence type="ECO:0000255" key="1">
    <source>
        <dbReference type="HAMAP-Rule" id="MF_00300"/>
    </source>
</evidence>
<proteinExistence type="inferred from homology"/>
<protein>
    <recommendedName>
        <fullName evidence="1">Chorismate synthase</fullName>
        <shortName evidence="1">CS</shortName>
        <ecNumber evidence="1">4.2.3.5</ecNumber>
    </recommendedName>
    <alternativeName>
        <fullName evidence="1">5-enolpyruvylshikimate-3-phosphate phospholyase</fullName>
    </alternativeName>
</protein>
<feature type="chain" id="PRO_0000256318" description="Chorismate synthase">
    <location>
        <begin position="1"/>
        <end position="363"/>
    </location>
</feature>
<feature type="binding site" evidence="1">
    <location>
        <position position="48"/>
    </location>
    <ligand>
        <name>NADP(+)</name>
        <dbReference type="ChEBI" id="CHEBI:58349"/>
    </ligand>
</feature>
<feature type="binding site" evidence="1">
    <location>
        <position position="54"/>
    </location>
    <ligand>
        <name>NADP(+)</name>
        <dbReference type="ChEBI" id="CHEBI:58349"/>
    </ligand>
</feature>
<feature type="binding site" evidence="1">
    <location>
        <begin position="125"/>
        <end position="127"/>
    </location>
    <ligand>
        <name>FMN</name>
        <dbReference type="ChEBI" id="CHEBI:58210"/>
    </ligand>
</feature>
<feature type="binding site" evidence="1">
    <location>
        <begin position="237"/>
        <end position="238"/>
    </location>
    <ligand>
        <name>FMN</name>
        <dbReference type="ChEBI" id="CHEBI:58210"/>
    </ligand>
</feature>
<feature type="binding site" evidence="1">
    <location>
        <position position="277"/>
    </location>
    <ligand>
        <name>FMN</name>
        <dbReference type="ChEBI" id="CHEBI:58210"/>
    </ligand>
</feature>
<feature type="binding site" evidence="1">
    <location>
        <begin position="292"/>
        <end position="296"/>
    </location>
    <ligand>
        <name>FMN</name>
        <dbReference type="ChEBI" id="CHEBI:58210"/>
    </ligand>
</feature>
<feature type="binding site" evidence="1">
    <location>
        <position position="318"/>
    </location>
    <ligand>
        <name>FMN</name>
        <dbReference type="ChEBI" id="CHEBI:58210"/>
    </ligand>
</feature>
<dbReference type="EC" id="4.2.3.5" evidence="1"/>
<dbReference type="EMBL" id="CP000094">
    <property type="protein sequence ID" value="ABA73465.1"/>
    <property type="molecule type" value="Genomic_DNA"/>
</dbReference>
<dbReference type="RefSeq" id="WP_011333207.1">
    <property type="nucleotide sequence ID" value="NC_007492.2"/>
</dbReference>
<dbReference type="SMR" id="Q3KFJ1"/>
<dbReference type="KEGG" id="pfo:Pfl01_1722"/>
<dbReference type="eggNOG" id="COG0082">
    <property type="taxonomic scope" value="Bacteria"/>
</dbReference>
<dbReference type="HOGENOM" id="CLU_034547_0_2_6"/>
<dbReference type="UniPathway" id="UPA00053">
    <property type="reaction ID" value="UER00090"/>
</dbReference>
<dbReference type="Proteomes" id="UP000002704">
    <property type="component" value="Chromosome"/>
</dbReference>
<dbReference type="GO" id="GO:0005829">
    <property type="term" value="C:cytosol"/>
    <property type="evidence" value="ECO:0007669"/>
    <property type="project" value="TreeGrafter"/>
</dbReference>
<dbReference type="GO" id="GO:0004107">
    <property type="term" value="F:chorismate synthase activity"/>
    <property type="evidence" value="ECO:0007669"/>
    <property type="project" value="UniProtKB-UniRule"/>
</dbReference>
<dbReference type="GO" id="GO:0010181">
    <property type="term" value="F:FMN binding"/>
    <property type="evidence" value="ECO:0007669"/>
    <property type="project" value="TreeGrafter"/>
</dbReference>
<dbReference type="GO" id="GO:0008652">
    <property type="term" value="P:amino acid biosynthetic process"/>
    <property type="evidence" value="ECO:0007669"/>
    <property type="project" value="UniProtKB-KW"/>
</dbReference>
<dbReference type="GO" id="GO:0009073">
    <property type="term" value="P:aromatic amino acid family biosynthetic process"/>
    <property type="evidence" value="ECO:0007669"/>
    <property type="project" value="UniProtKB-KW"/>
</dbReference>
<dbReference type="GO" id="GO:0009423">
    <property type="term" value="P:chorismate biosynthetic process"/>
    <property type="evidence" value="ECO:0007669"/>
    <property type="project" value="UniProtKB-UniRule"/>
</dbReference>
<dbReference type="CDD" id="cd07304">
    <property type="entry name" value="Chorismate_synthase"/>
    <property type="match status" value="1"/>
</dbReference>
<dbReference type="FunFam" id="3.60.150.10:FF:000001">
    <property type="entry name" value="Chorismate synthase"/>
    <property type="match status" value="1"/>
</dbReference>
<dbReference type="Gene3D" id="3.60.150.10">
    <property type="entry name" value="Chorismate synthase AroC"/>
    <property type="match status" value="1"/>
</dbReference>
<dbReference type="HAMAP" id="MF_00300">
    <property type="entry name" value="Chorismate_synth"/>
    <property type="match status" value="1"/>
</dbReference>
<dbReference type="InterPro" id="IPR000453">
    <property type="entry name" value="Chorismate_synth"/>
</dbReference>
<dbReference type="InterPro" id="IPR035904">
    <property type="entry name" value="Chorismate_synth_AroC_sf"/>
</dbReference>
<dbReference type="InterPro" id="IPR020541">
    <property type="entry name" value="Chorismate_synthase_CS"/>
</dbReference>
<dbReference type="NCBIfam" id="TIGR00033">
    <property type="entry name" value="aroC"/>
    <property type="match status" value="1"/>
</dbReference>
<dbReference type="NCBIfam" id="NF003793">
    <property type="entry name" value="PRK05382.1"/>
    <property type="match status" value="1"/>
</dbReference>
<dbReference type="PANTHER" id="PTHR21085">
    <property type="entry name" value="CHORISMATE SYNTHASE"/>
    <property type="match status" value="1"/>
</dbReference>
<dbReference type="PANTHER" id="PTHR21085:SF0">
    <property type="entry name" value="CHORISMATE SYNTHASE"/>
    <property type="match status" value="1"/>
</dbReference>
<dbReference type="Pfam" id="PF01264">
    <property type="entry name" value="Chorismate_synt"/>
    <property type="match status" value="1"/>
</dbReference>
<dbReference type="PIRSF" id="PIRSF001456">
    <property type="entry name" value="Chorismate_synth"/>
    <property type="match status" value="1"/>
</dbReference>
<dbReference type="SUPFAM" id="SSF103263">
    <property type="entry name" value="Chorismate synthase, AroC"/>
    <property type="match status" value="1"/>
</dbReference>
<dbReference type="PROSITE" id="PS00787">
    <property type="entry name" value="CHORISMATE_SYNTHASE_1"/>
    <property type="match status" value="1"/>
</dbReference>
<dbReference type="PROSITE" id="PS00788">
    <property type="entry name" value="CHORISMATE_SYNTHASE_2"/>
    <property type="match status" value="1"/>
</dbReference>
<dbReference type="PROSITE" id="PS00789">
    <property type="entry name" value="CHORISMATE_SYNTHASE_3"/>
    <property type="match status" value="1"/>
</dbReference>
<keyword id="KW-0028">Amino-acid biosynthesis</keyword>
<keyword id="KW-0057">Aromatic amino acid biosynthesis</keyword>
<keyword id="KW-0274">FAD</keyword>
<keyword id="KW-0285">Flavoprotein</keyword>
<keyword id="KW-0288">FMN</keyword>
<keyword id="KW-0456">Lyase</keyword>
<keyword id="KW-0521">NADP</keyword>
<reference key="1">
    <citation type="journal article" date="2009" name="Genome Biol.">
        <title>Genomic and genetic analyses of diversity and plant interactions of Pseudomonas fluorescens.</title>
        <authorList>
            <person name="Silby M.W."/>
            <person name="Cerdeno-Tarraga A.M."/>
            <person name="Vernikos G.S."/>
            <person name="Giddens S.R."/>
            <person name="Jackson R.W."/>
            <person name="Preston G.M."/>
            <person name="Zhang X.-X."/>
            <person name="Moon C.D."/>
            <person name="Gehrig S.M."/>
            <person name="Godfrey S.A.C."/>
            <person name="Knight C.G."/>
            <person name="Malone J.G."/>
            <person name="Robinson Z."/>
            <person name="Spiers A.J."/>
            <person name="Harris S."/>
            <person name="Challis G.L."/>
            <person name="Yaxley A.M."/>
            <person name="Harris D."/>
            <person name="Seeger K."/>
            <person name="Murphy L."/>
            <person name="Rutter S."/>
            <person name="Squares R."/>
            <person name="Quail M.A."/>
            <person name="Saunders E."/>
            <person name="Mavromatis K."/>
            <person name="Brettin T.S."/>
            <person name="Bentley S.D."/>
            <person name="Hothersall J."/>
            <person name="Stephens E."/>
            <person name="Thomas C.M."/>
            <person name="Parkhill J."/>
            <person name="Levy S.B."/>
            <person name="Rainey P.B."/>
            <person name="Thomson N.R."/>
        </authorList>
    </citation>
    <scope>NUCLEOTIDE SEQUENCE [LARGE SCALE GENOMIC DNA]</scope>
    <source>
        <strain>Pf0-1</strain>
    </source>
</reference>